<name>CAPSD_BPSK9</name>
<dbReference type="EMBL" id="AB452990">
    <property type="protein sequence ID" value="BAH15171.1"/>
    <property type="molecule type" value="Genomic_DNA"/>
</dbReference>
<dbReference type="SMR" id="P85989"/>
<dbReference type="GO" id="GO:0019028">
    <property type="term" value="C:viral capsid"/>
    <property type="evidence" value="ECO:0007669"/>
    <property type="project" value="UniProtKB-KW"/>
</dbReference>
<dbReference type="InterPro" id="IPR010762">
    <property type="entry name" value="Gp23/Gp24_T4-like"/>
</dbReference>
<dbReference type="Pfam" id="PF07068">
    <property type="entry name" value="Gp23"/>
    <property type="match status" value="1"/>
</dbReference>
<protein>
    <recommendedName>
        <fullName evidence="4">Major capsid protein</fullName>
    </recommendedName>
    <alternativeName>
        <fullName evidence="2">Virion protein D</fullName>
    </alternativeName>
</protein>
<organismHost>
    <name type="scientific">Serratia marcescens</name>
    <dbReference type="NCBI Taxonomy" id="615"/>
</organismHost>
<keyword id="KW-0167">Capsid protein</keyword>
<keyword id="KW-0903">Direct protein sequencing</keyword>
<keyword id="KW-0946">Virion</keyword>
<evidence type="ECO:0000269" key="1">
    <source>
    </source>
</evidence>
<evidence type="ECO:0000303" key="2">
    <source>
    </source>
</evidence>
<evidence type="ECO:0000305" key="3"/>
<evidence type="ECO:0000312" key="4">
    <source>
        <dbReference type="EMBL" id="BAH15171.1"/>
    </source>
</evidence>
<reference evidence="3 4" key="1">
    <citation type="journal article" date="2009" name="FEMS Microbiol. Lett.">
        <title>Morphological and genetic analysis of three bacteriophages of Serratia marcescens isolated from environmental water.</title>
        <authorList>
            <person name="Matsushita K."/>
            <person name="Uchiyama J."/>
            <person name="Kato S."/>
            <person name="Ujihara T."/>
            <person name="Hoshiba H."/>
            <person name="Sugihara S."/>
            <person name="Muraoka A."/>
            <person name="Wakiguchi H."/>
            <person name="Matsuzaki S."/>
        </authorList>
    </citation>
    <scope>NUCLEOTIDE SEQUENCE [GENOMIC DNA]</scope>
    <scope>PROTEIN SEQUENCE OF 52-70</scope>
</reference>
<organism>
    <name type="scientific">Serratia phage KSP90</name>
    <name type="common">Serratia marcescens bacteriophage KSP90</name>
    <dbReference type="NCBI Taxonomy" id="552528"/>
    <lineage>
        <taxon>Viruses</taxon>
        <taxon>Duplodnaviria</taxon>
        <taxon>Heunggongvirae</taxon>
        <taxon>Uroviricota</taxon>
        <taxon>Caudoviricetes</taxon>
        <taxon>Ackermannviridae</taxon>
        <taxon>Miltonvirus</taxon>
    </lineage>
</organism>
<feature type="propeptide" id="PRO_0000391687" evidence="1">
    <location>
        <begin position="1"/>
        <end position="51"/>
    </location>
</feature>
<feature type="chain" id="PRO_0000351156" description="Major capsid protein" evidence="1">
    <location>
        <begin position="52"/>
        <end position="441"/>
    </location>
</feature>
<accession>P85989</accession>
<accession>B9A7C5</accession>
<proteinExistence type="evidence at protein level"/>
<sequence>MSKKLVTEEMRTQWLPVLEKKSEQIQPLTAENVSVRLLQNQAEWNAKNLGESEGPSSVNANVGKWQPVLIDMAKRLAPNNIAMDFFGVQPLAGPDGQIFALRARQGVGDASNTQQSRKELFMEEAQTNYSGDQTTVHSGDPSGFSQADIEGSGTEVSSYGKAMDTVKAEQLGSPTQPWARVGITIQKATVTAKSRGLYADYSHELRQDMMAIHGEDVDAILSDVMVTEIQAEMNREFIRTMNFTAVRFKKFGTNGVVDVAADVSGRWALEKWKYLVFMLEVEANGVGVDTRRGKANRVLCSPNVASALAMAGMLDYSPALNVQAQLAVDPTGQTFAGVLSNGMRVYIDPYAVAEYITLAYKGATALDAGIYFAPYVPLEMYRTQGETTFAPRMAFKTRYGIAANPFVQIPANQDPQVYVTEDGIAKDTNVYFRKGLIKNLY</sequence>
<comment type="subcellular location">
    <subcellularLocation>
        <location evidence="1">Virion</location>
    </subcellularLocation>
</comment>